<feature type="chain" id="PRO_1000056198" description="Bifunctional protein GlmU">
    <location>
        <begin position="1"/>
        <end position="454"/>
    </location>
</feature>
<feature type="region of interest" description="Pyrophosphorylase" evidence="1">
    <location>
        <begin position="1"/>
        <end position="226"/>
    </location>
</feature>
<feature type="region of interest" description="Linker" evidence="1">
    <location>
        <begin position="227"/>
        <end position="247"/>
    </location>
</feature>
<feature type="region of interest" description="N-acetyltransferase" evidence="1">
    <location>
        <begin position="248"/>
        <end position="454"/>
    </location>
</feature>
<feature type="active site" description="Proton acceptor" evidence="1">
    <location>
        <position position="360"/>
    </location>
</feature>
<feature type="binding site" evidence="1">
    <location>
        <begin position="8"/>
        <end position="11"/>
    </location>
    <ligand>
        <name>UDP-N-acetyl-alpha-D-glucosamine</name>
        <dbReference type="ChEBI" id="CHEBI:57705"/>
    </ligand>
</feature>
<feature type="binding site" evidence="1">
    <location>
        <position position="22"/>
    </location>
    <ligand>
        <name>UDP-N-acetyl-alpha-D-glucosamine</name>
        <dbReference type="ChEBI" id="CHEBI:57705"/>
    </ligand>
</feature>
<feature type="binding site" evidence="1">
    <location>
        <position position="73"/>
    </location>
    <ligand>
        <name>UDP-N-acetyl-alpha-D-glucosamine</name>
        <dbReference type="ChEBI" id="CHEBI:57705"/>
    </ligand>
</feature>
<feature type="binding site" evidence="1">
    <location>
        <begin position="78"/>
        <end position="79"/>
    </location>
    <ligand>
        <name>UDP-N-acetyl-alpha-D-glucosamine</name>
        <dbReference type="ChEBI" id="CHEBI:57705"/>
    </ligand>
</feature>
<feature type="binding site" evidence="1">
    <location>
        <begin position="100"/>
        <end position="102"/>
    </location>
    <ligand>
        <name>UDP-N-acetyl-alpha-D-glucosamine</name>
        <dbReference type="ChEBI" id="CHEBI:57705"/>
    </ligand>
</feature>
<feature type="binding site" evidence="1">
    <location>
        <position position="102"/>
    </location>
    <ligand>
        <name>Mg(2+)</name>
        <dbReference type="ChEBI" id="CHEBI:18420"/>
    </ligand>
</feature>
<feature type="binding site" evidence="1">
    <location>
        <position position="137"/>
    </location>
    <ligand>
        <name>UDP-N-acetyl-alpha-D-glucosamine</name>
        <dbReference type="ChEBI" id="CHEBI:57705"/>
    </ligand>
</feature>
<feature type="binding site" evidence="1">
    <location>
        <position position="151"/>
    </location>
    <ligand>
        <name>UDP-N-acetyl-alpha-D-glucosamine</name>
        <dbReference type="ChEBI" id="CHEBI:57705"/>
    </ligand>
</feature>
<feature type="binding site" evidence="1">
    <location>
        <position position="166"/>
    </location>
    <ligand>
        <name>UDP-N-acetyl-alpha-D-glucosamine</name>
        <dbReference type="ChEBI" id="CHEBI:57705"/>
    </ligand>
</feature>
<feature type="binding site" evidence="1">
    <location>
        <position position="224"/>
    </location>
    <ligand>
        <name>Mg(2+)</name>
        <dbReference type="ChEBI" id="CHEBI:18420"/>
    </ligand>
</feature>
<feature type="binding site" evidence="1">
    <location>
        <position position="224"/>
    </location>
    <ligand>
        <name>UDP-N-acetyl-alpha-D-glucosamine</name>
        <dbReference type="ChEBI" id="CHEBI:57705"/>
    </ligand>
</feature>
<feature type="binding site" evidence="1">
    <location>
        <position position="330"/>
    </location>
    <ligand>
        <name>UDP-N-acetyl-alpha-D-glucosamine</name>
        <dbReference type="ChEBI" id="CHEBI:57705"/>
    </ligand>
</feature>
<feature type="binding site" evidence="1">
    <location>
        <position position="348"/>
    </location>
    <ligand>
        <name>UDP-N-acetyl-alpha-D-glucosamine</name>
        <dbReference type="ChEBI" id="CHEBI:57705"/>
    </ligand>
</feature>
<feature type="binding site" evidence="1">
    <location>
        <position position="363"/>
    </location>
    <ligand>
        <name>UDP-N-acetyl-alpha-D-glucosamine</name>
        <dbReference type="ChEBI" id="CHEBI:57705"/>
    </ligand>
</feature>
<feature type="binding site" evidence="1">
    <location>
        <position position="374"/>
    </location>
    <ligand>
        <name>UDP-N-acetyl-alpha-D-glucosamine</name>
        <dbReference type="ChEBI" id="CHEBI:57705"/>
    </ligand>
</feature>
<feature type="binding site" evidence="1">
    <location>
        <position position="377"/>
    </location>
    <ligand>
        <name>acetyl-CoA</name>
        <dbReference type="ChEBI" id="CHEBI:57288"/>
    </ligand>
</feature>
<feature type="binding site" evidence="1">
    <location>
        <begin position="383"/>
        <end position="384"/>
    </location>
    <ligand>
        <name>acetyl-CoA</name>
        <dbReference type="ChEBI" id="CHEBI:57288"/>
    </ligand>
</feature>
<feature type="binding site" evidence="1">
    <location>
        <position position="402"/>
    </location>
    <ligand>
        <name>acetyl-CoA</name>
        <dbReference type="ChEBI" id="CHEBI:57288"/>
    </ligand>
</feature>
<feature type="binding site" evidence="1">
    <location>
        <position position="420"/>
    </location>
    <ligand>
        <name>acetyl-CoA</name>
        <dbReference type="ChEBI" id="CHEBI:57288"/>
    </ligand>
</feature>
<feature type="binding site" evidence="1">
    <location>
        <position position="437"/>
    </location>
    <ligand>
        <name>acetyl-CoA</name>
        <dbReference type="ChEBI" id="CHEBI:57288"/>
    </ligand>
</feature>
<sequence>MALNVVILAAGKGTRMRSDLPKVLHPIAHKSMVQHVIDTAHSIGSDAIQLVYGYGADKLQASLGEQQLNWVLQAEQLGTGHAVAQASPYIADNDTVLILYGDVPLIQASTLEALLAARPENGVAILTVNLANPTGYGRIVREQGKVVGIIEQKDANPEQLLINEINTGIMAVPGKQLKTWLSRLSNNNAQGEYYLTDIIAMAHADGVAIDTAQPQSAIEVEGANNRVQLAQLERAYQAREAEKLMLAGANLRDPHRIDIRGEVTVGMDVMIDINVIFEGKVILGNNVTIGAGAILIDCEIADGAEIKPYSIIEGAKLGVAASAGPFARLRPGAELKQDAHIGNFVEVKKAIIGVGSKAGHLAYLGDAIIGDGVNIGAGTITCNYDGANKHLTVIEDNVFVGSDTQLVAPVTIGKGATLGAGSTITRDVGENELVITRVKQKHLLDWKRPVKIKK</sequence>
<keyword id="KW-0012">Acyltransferase</keyword>
<keyword id="KW-0133">Cell shape</keyword>
<keyword id="KW-0961">Cell wall biogenesis/degradation</keyword>
<keyword id="KW-0963">Cytoplasm</keyword>
<keyword id="KW-0460">Magnesium</keyword>
<keyword id="KW-0479">Metal-binding</keyword>
<keyword id="KW-0511">Multifunctional enzyme</keyword>
<keyword id="KW-0548">Nucleotidyltransferase</keyword>
<keyword id="KW-0573">Peptidoglycan synthesis</keyword>
<keyword id="KW-0677">Repeat</keyword>
<keyword id="KW-0808">Transferase</keyword>
<name>GLMU_SHEPC</name>
<reference key="1">
    <citation type="submission" date="2007-04" db="EMBL/GenBank/DDBJ databases">
        <title>Complete sequence of Shewanella putrefaciens CN-32.</title>
        <authorList>
            <consortium name="US DOE Joint Genome Institute"/>
            <person name="Copeland A."/>
            <person name="Lucas S."/>
            <person name="Lapidus A."/>
            <person name="Barry K."/>
            <person name="Detter J.C."/>
            <person name="Glavina del Rio T."/>
            <person name="Hammon N."/>
            <person name="Israni S."/>
            <person name="Dalin E."/>
            <person name="Tice H."/>
            <person name="Pitluck S."/>
            <person name="Chain P."/>
            <person name="Malfatti S."/>
            <person name="Shin M."/>
            <person name="Vergez L."/>
            <person name="Schmutz J."/>
            <person name="Larimer F."/>
            <person name="Land M."/>
            <person name="Hauser L."/>
            <person name="Kyrpides N."/>
            <person name="Mikhailova N."/>
            <person name="Romine M.F."/>
            <person name="Fredrickson J."/>
            <person name="Tiedje J."/>
            <person name="Richardson P."/>
        </authorList>
    </citation>
    <scope>NUCLEOTIDE SEQUENCE [LARGE SCALE GENOMIC DNA]</scope>
    <source>
        <strain>CN-32 / ATCC BAA-453</strain>
    </source>
</reference>
<comment type="function">
    <text evidence="1">Catalyzes the last two sequential reactions in the de novo biosynthetic pathway for UDP-N-acetylglucosamine (UDP-GlcNAc). The C-terminal domain catalyzes the transfer of acetyl group from acetyl coenzyme A to glucosamine-1-phosphate (GlcN-1-P) to produce N-acetylglucosamine-1-phosphate (GlcNAc-1-P), which is converted into UDP-GlcNAc by the transfer of uridine 5-monophosphate (from uridine 5-triphosphate), a reaction catalyzed by the N-terminal domain.</text>
</comment>
<comment type="catalytic activity">
    <reaction evidence="1">
        <text>alpha-D-glucosamine 1-phosphate + acetyl-CoA = N-acetyl-alpha-D-glucosamine 1-phosphate + CoA + H(+)</text>
        <dbReference type="Rhea" id="RHEA:13725"/>
        <dbReference type="ChEBI" id="CHEBI:15378"/>
        <dbReference type="ChEBI" id="CHEBI:57287"/>
        <dbReference type="ChEBI" id="CHEBI:57288"/>
        <dbReference type="ChEBI" id="CHEBI:57776"/>
        <dbReference type="ChEBI" id="CHEBI:58516"/>
        <dbReference type="EC" id="2.3.1.157"/>
    </reaction>
</comment>
<comment type="catalytic activity">
    <reaction evidence="1">
        <text>N-acetyl-alpha-D-glucosamine 1-phosphate + UTP + H(+) = UDP-N-acetyl-alpha-D-glucosamine + diphosphate</text>
        <dbReference type="Rhea" id="RHEA:13509"/>
        <dbReference type="ChEBI" id="CHEBI:15378"/>
        <dbReference type="ChEBI" id="CHEBI:33019"/>
        <dbReference type="ChEBI" id="CHEBI:46398"/>
        <dbReference type="ChEBI" id="CHEBI:57705"/>
        <dbReference type="ChEBI" id="CHEBI:57776"/>
        <dbReference type="EC" id="2.7.7.23"/>
    </reaction>
</comment>
<comment type="cofactor">
    <cofactor evidence="1">
        <name>Mg(2+)</name>
        <dbReference type="ChEBI" id="CHEBI:18420"/>
    </cofactor>
    <text evidence="1">Binds 1 Mg(2+) ion per subunit.</text>
</comment>
<comment type="pathway">
    <text evidence="1">Nucleotide-sugar biosynthesis; UDP-N-acetyl-alpha-D-glucosamine biosynthesis; N-acetyl-alpha-D-glucosamine 1-phosphate from alpha-D-glucosamine 6-phosphate (route II): step 2/2.</text>
</comment>
<comment type="pathway">
    <text evidence="1">Nucleotide-sugar biosynthesis; UDP-N-acetyl-alpha-D-glucosamine biosynthesis; UDP-N-acetyl-alpha-D-glucosamine from N-acetyl-alpha-D-glucosamine 1-phosphate: step 1/1.</text>
</comment>
<comment type="pathway">
    <text evidence="1">Bacterial outer membrane biogenesis; LPS lipid A biosynthesis.</text>
</comment>
<comment type="subunit">
    <text evidence="1">Homotrimer.</text>
</comment>
<comment type="subcellular location">
    <subcellularLocation>
        <location evidence="1">Cytoplasm</location>
    </subcellularLocation>
</comment>
<comment type="similarity">
    <text evidence="1">In the N-terminal section; belongs to the N-acetylglucosamine-1-phosphate uridyltransferase family.</text>
</comment>
<comment type="similarity">
    <text evidence="1">In the C-terminal section; belongs to the transferase hexapeptide repeat family.</text>
</comment>
<protein>
    <recommendedName>
        <fullName evidence="1">Bifunctional protein GlmU</fullName>
    </recommendedName>
    <domain>
        <recommendedName>
            <fullName evidence="1">UDP-N-acetylglucosamine pyrophosphorylase</fullName>
            <ecNumber evidence="1">2.7.7.23</ecNumber>
        </recommendedName>
        <alternativeName>
            <fullName evidence="1">N-acetylglucosamine-1-phosphate uridyltransferase</fullName>
        </alternativeName>
    </domain>
    <domain>
        <recommendedName>
            <fullName evidence="1">Glucosamine-1-phosphate N-acetyltransferase</fullName>
            <ecNumber evidence="1">2.3.1.157</ecNumber>
        </recommendedName>
    </domain>
</protein>
<dbReference type="EC" id="2.7.7.23" evidence="1"/>
<dbReference type="EC" id="2.3.1.157" evidence="1"/>
<dbReference type="EMBL" id="CP000681">
    <property type="protein sequence ID" value="ABP77659.1"/>
    <property type="molecule type" value="Genomic_DNA"/>
</dbReference>
<dbReference type="SMR" id="A4YCH6"/>
<dbReference type="STRING" id="319224.Sputcn32_3954"/>
<dbReference type="KEGG" id="spc:Sputcn32_3954"/>
<dbReference type="eggNOG" id="COG1207">
    <property type="taxonomic scope" value="Bacteria"/>
</dbReference>
<dbReference type="HOGENOM" id="CLU_029499_15_2_6"/>
<dbReference type="UniPathway" id="UPA00113">
    <property type="reaction ID" value="UER00532"/>
</dbReference>
<dbReference type="UniPathway" id="UPA00113">
    <property type="reaction ID" value="UER00533"/>
</dbReference>
<dbReference type="UniPathway" id="UPA00973"/>
<dbReference type="GO" id="GO:0005737">
    <property type="term" value="C:cytoplasm"/>
    <property type="evidence" value="ECO:0007669"/>
    <property type="project" value="UniProtKB-SubCell"/>
</dbReference>
<dbReference type="GO" id="GO:0016020">
    <property type="term" value="C:membrane"/>
    <property type="evidence" value="ECO:0007669"/>
    <property type="project" value="GOC"/>
</dbReference>
<dbReference type="GO" id="GO:0019134">
    <property type="term" value="F:glucosamine-1-phosphate N-acetyltransferase activity"/>
    <property type="evidence" value="ECO:0007669"/>
    <property type="project" value="UniProtKB-UniRule"/>
</dbReference>
<dbReference type="GO" id="GO:0000287">
    <property type="term" value="F:magnesium ion binding"/>
    <property type="evidence" value="ECO:0007669"/>
    <property type="project" value="UniProtKB-UniRule"/>
</dbReference>
<dbReference type="GO" id="GO:0003977">
    <property type="term" value="F:UDP-N-acetylglucosamine diphosphorylase activity"/>
    <property type="evidence" value="ECO:0007669"/>
    <property type="project" value="UniProtKB-UniRule"/>
</dbReference>
<dbReference type="GO" id="GO:0000902">
    <property type="term" value="P:cell morphogenesis"/>
    <property type="evidence" value="ECO:0007669"/>
    <property type="project" value="UniProtKB-UniRule"/>
</dbReference>
<dbReference type="GO" id="GO:0071555">
    <property type="term" value="P:cell wall organization"/>
    <property type="evidence" value="ECO:0007669"/>
    <property type="project" value="UniProtKB-KW"/>
</dbReference>
<dbReference type="GO" id="GO:0009245">
    <property type="term" value="P:lipid A biosynthetic process"/>
    <property type="evidence" value="ECO:0007669"/>
    <property type="project" value="UniProtKB-UniRule"/>
</dbReference>
<dbReference type="GO" id="GO:0009252">
    <property type="term" value="P:peptidoglycan biosynthetic process"/>
    <property type="evidence" value="ECO:0007669"/>
    <property type="project" value="UniProtKB-UniRule"/>
</dbReference>
<dbReference type="GO" id="GO:0008360">
    <property type="term" value="P:regulation of cell shape"/>
    <property type="evidence" value="ECO:0007669"/>
    <property type="project" value="UniProtKB-KW"/>
</dbReference>
<dbReference type="GO" id="GO:0006048">
    <property type="term" value="P:UDP-N-acetylglucosamine biosynthetic process"/>
    <property type="evidence" value="ECO:0007669"/>
    <property type="project" value="UniProtKB-UniPathway"/>
</dbReference>
<dbReference type="CDD" id="cd02540">
    <property type="entry name" value="GT2_GlmU_N_bac"/>
    <property type="match status" value="1"/>
</dbReference>
<dbReference type="CDD" id="cd03353">
    <property type="entry name" value="LbH_GlmU_C"/>
    <property type="match status" value="1"/>
</dbReference>
<dbReference type="FunFam" id="3.90.550.10:FF:000006">
    <property type="entry name" value="Bifunctional protein GlmU"/>
    <property type="match status" value="1"/>
</dbReference>
<dbReference type="Gene3D" id="2.160.10.10">
    <property type="entry name" value="Hexapeptide repeat proteins"/>
    <property type="match status" value="1"/>
</dbReference>
<dbReference type="Gene3D" id="3.90.550.10">
    <property type="entry name" value="Spore Coat Polysaccharide Biosynthesis Protein SpsA, Chain A"/>
    <property type="match status" value="1"/>
</dbReference>
<dbReference type="HAMAP" id="MF_01631">
    <property type="entry name" value="GlmU"/>
    <property type="match status" value="1"/>
</dbReference>
<dbReference type="InterPro" id="IPR005882">
    <property type="entry name" value="Bifunctional_GlmU"/>
</dbReference>
<dbReference type="InterPro" id="IPR050065">
    <property type="entry name" value="GlmU-like"/>
</dbReference>
<dbReference type="InterPro" id="IPR038009">
    <property type="entry name" value="GlmU_C_LbH"/>
</dbReference>
<dbReference type="InterPro" id="IPR001451">
    <property type="entry name" value="Hexapep"/>
</dbReference>
<dbReference type="InterPro" id="IPR018357">
    <property type="entry name" value="Hexapep_transf_CS"/>
</dbReference>
<dbReference type="InterPro" id="IPR025877">
    <property type="entry name" value="MobA-like_NTP_Trfase"/>
</dbReference>
<dbReference type="InterPro" id="IPR029044">
    <property type="entry name" value="Nucleotide-diphossugar_trans"/>
</dbReference>
<dbReference type="InterPro" id="IPR011004">
    <property type="entry name" value="Trimer_LpxA-like_sf"/>
</dbReference>
<dbReference type="NCBIfam" id="TIGR01173">
    <property type="entry name" value="glmU"/>
    <property type="match status" value="1"/>
</dbReference>
<dbReference type="NCBIfam" id="NF006986">
    <property type="entry name" value="PRK09451.1"/>
    <property type="match status" value="1"/>
</dbReference>
<dbReference type="PANTHER" id="PTHR43584:SF3">
    <property type="entry name" value="BIFUNCTIONAL PROTEIN GLMU"/>
    <property type="match status" value="1"/>
</dbReference>
<dbReference type="PANTHER" id="PTHR43584">
    <property type="entry name" value="NUCLEOTIDYL TRANSFERASE"/>
    <property type="match status" value="1"/>
</dbReference>
<dbReference type="Pfam" id="PF00132">
    <property type="entry name" value="Hexapep"/>
    <property type="match status" value="2"/>
</dbReference>
<dbReference type="Pfam" id="PF12804">
    <property type="entry name" value="NTP_transf_3"/>
    <property type="match status" value="1"/>
</dbReference>
<dbReference type="SUPFAM" id="SSF53448">
    <property type="entry name" value="Nucleotide-diphospho-sugar transferases"/>
    <property type="match status" value="1"/>
</dbReference>
<dbReference type="SUPFAM" id="SSF51161">
    <property type="entry name" value="Trimeric LpxA-like enzymes"/>
    <property type="match status" value="1"/>
</dbReference>
<dbReference type="PROSITE" id="PS00101">
    <property type="entry name" value="HEXAPEP_TRANSFERASES"/>
    <property type="match status" value="1"/>
</dbReference>
<proteinExistence type="inferred from homology"/>
<gene>
    <name evidence="1" type="primary">glmU</name>
    <name type="ordered locus">Sputcn32_3954</name>
</gene>
<organism>
    <name type="scientific">Shewanella putrefaciens (strain CN-32 / ATCC BAA-453)</name>
    <dbReference type="NCBI Taxonomy" id="319224"/>
    <lineage>
        <taxon>Bacteria</taxon>
        <taxon>Pseudomonadati</taxon>
        <taxon>Pseudomonadota</taxon>
        <taxon>Gammaproteobacteria</taxon>
        <taxon>Alteromonadales</taxon>
        <taxon>Shewanellaceae</taxon>
        <taxon>Shewanella</taxon>
    </lineage>
</organism>
<accession>A4YCH6</accession>
<evidence type="ECO:0000255" key="1">
    <source>
        <dbReference type="HAMAP-Rule" id="MF_01631"/>
    </source>
</evidence>